<comment type="function">
    <text evidence="1">NDH-1 shuttles electrons from NADH, via FMN and iron-sulfur (Fe-S) centers, to quinones in the respiratory chain. The immediate electron acceptor for the enzyme in this species is believed to be ubiquinone. Couples the redox reaction to proton translocation (for every two electrons transferred, four hydrogen ions are translocated across the cytoplasmic membrane), and thus conserves the redox energy in a proton gradient.</text>
</comment>
<comment type="catalytic activity">
    <reaction evidence="1">
        <text>a quinone + NADH + 5 H(+)(in) = a quinol + NAD(+) + 4 H(+)(out)</text>
        <dbReference type="Rhea" id="RHEA:57888"/>
        <dbReference type="ChEBI" id="CHEBI:15378"/>
        <dbReference type="ChEBI" id="CHEBI:24646"/>
        <dbReference type="ChEBI" id="CHEBI:57540"/>
        <dbReference type="ChEBI" id="CHEBI:57945"/>
        <dbReference type="ChEBI" id="CHEBI:132124"/>
    </reaction>
</comment>
<comment type="subunit">
    <text evidence="1">NDH-1 is composed of 14 different subunits. Subunits NuoA, H, J, K, L, M, N constitute the membrane sector of the complex.</text>
</comment>
<comment type="subcellular location">
    <subcellularLocation>
        <location evidence="1">Cell inner membrane</location>
        <topology evidence="1">Multi-pass membrane protein</topology>
    </subcellularLocation>
</comment>
<comment type="similarity">
    <text evidence="1">Belongs to the complex I subunit 2 family.</text>
</comment>
<feature type="chain" id="PRO_0000391131" description="NADH-quinone oxidoreductase subunit N">
    <location>
        <begin position="1"/>
        <end position="491"/>
    </location>
</feature>
<feature type="transmembrane region" description="Helical" evidence="1">
    <location>
        <begin position="6"/>
        <end position="26"/>
    </location>
</feature>
<feature type="transmembrane region" description="Helical" evidence="1">
    <location>
        <begin position="37"/>
        <end position="57"/>
    </location>
</feature>
<feature type="transmembrane region" description="Helical" evidence="1">
    <location>
        <begin position="69"/>
        <end position="89"/>
    </location>
</feature>
<feature type="transmembrane region" description="Helical" evidence="1">
    <location>
        <begin position="103"/>
        <end position="123"/>
    </location>
</feature>
<feature type="transmembrane region" description="Helical" evidence="1">
    <location>
        <begin position="128"/>
        <end position="148"/>
    </location>
</feature>
<feature type="transmembrane region" description="Helical" evidence="1">
    <location>
        <begin position="163"/>
        <end position="183"/>
    </location>
</feature>
<feature type="transmembrane region" description="Helical" evidence="1">
    <location>
        <begin position="206"/>
        <end position="226"/>
    </location>
</feature>
<feature type="transmembrane region" description="Helical" evidence="1">
    <location>
        <begin position="238"/>
        <end position="258"/>
    </location>
</feature>
<feature type="transmembrane region" description="Helical" evidence="1">
    <location>
        <begin position="273"/>
        <end position="293"/>
    </location>
</feature>
<feature type="transmembrane region" description="Helical" evidence="1">
    <location>
        <begin position="301"/>
        <end position="321"/>
    </location>
</feature>
<feature type="transmembrane region" description="Helical" evidence="1">
    <location>
        <begin position="335"/>
        <end position="355"/>
    </location>
</feature>
<feature type="transmembrane region" description="Helical" evidence="1">
    <location>
        <begin position="379"/>
        <end position="399"/>
    </location>
</feature>
<feature type="transmembrane region" description="Helical" evidence="1">
    <location>
        <begin position="413"/>
        <end position="433"/>
    </location>
</feature>
<feature type="transmembrane region" description="Helical" evidence="1">
    <location>
        <begin position="458"/>
        <end position="478"/>
    </location>
</feature>
<sequence>MQPSSTLAPVAPIIFLAIAIAAINWIDLARGKGKQSVAYPLSLLTTLVLTAWFGMNAATGETHYAFANLVVIDPMANVLSAFCAAGLFVTLVYTRRYLAERDMFAGEFYMLALFTLGGQIVMITGNNFLTLYLGLELLSLSSYALVALRRESRVTSESAMKYFVLGALASGFLLYGISMMYGATGSLNLGEVFRAVESGRINTTMLAFGVVFIVAGLSFKLGAAPFHMWIPDIYQGSPTAVTLLIAGGPKVAAFALFIRVLVEGLLPLASDWQMMLVVLSIISLAIGNLTAIVQSNLKRMLAYSTISHMGFVLLGLLSGVVANKADGAADAYSSAMFYSVTYLLTTLGTFGIILLRTSKGFEAETLEDLKGMSRRNPWFAFLMLVMMFSLAGIPPTVGFYAKLAVLDAVVQAGMTWLAVVAVLFSLIGAFYYLRIVKLMYFDAPVGEEQLEATFGLRSMLSVNGAAVILLGLFPAALMNLCYQAIRSTLGS</sequence>
<evidence type="ECO:0000255" key="1">
    <source>
        <dbReference type="HAMAP-Rule" id="MF_00445"/>
    </source>
</evidence>
<name>NUON_CUPTR</name>
<dbReference type="EC" id="7.1.1.-" evidence="1"/>
<dbReference type="EMBL" id="CU633749">
    <property type="protein sequence ID" value="CAQ69012.1"/>
    <property type="molecule type" value="Genomic_DNA"/>
</dbReference>
<dbReference type="RefSeq" id="WP_012352341.1">
    <property type="nucleotide sequence ID" value="NC_010528.1"/>
</dbReference>
<dbReference type="SMR" id="B3R3Y0"/>
<dbReference type="GeneID" id="29760928"/>
<dbReference type="KEGG" id="cti:RALTA_A1047"/>
<dbReference type="eggNOG" id="COG1007">
    <property type="taxonomic scope" value="Bacteria"/>
</dbReference>
<dbReference type="HOGENOM" id="CLU_007100_1_3_4"/>
<dbReference type="BioCyc" id="CTAI977880:RALTA_RS04980-MONOMER"/>
<dbReference type="Proteomes" id="UP000001692">
    <property type="component" value="Chromosome 1"/>
</dbReference>
<dbReference type="GO" id="GO:0005886">
    <property type="term" value="C:plasma membrane"/>
    <property type="evidence" value="ECO:0007669"/>
    <property type="project" value="UniProtKB-SubCell"/>
</dbReference>
<dbReference type="GO" id="GO:0008137">
    <property type="term" value="F:NADH dehydrogenase (ubiquinone) activity"/>
    <property type="evidence" value="ECO:0007669"/>
    <property type="project" value="InterPro"/>
</dbReference>
<dbReference type="GO" id="GO:0050136">
    <property type="term" value="F:NADH:ubiquinone reductase (non-electrogenic) activity"/>
    <property type="evidence" value="ECO:0007669"/>
    <property type="project" value="UniProtKB-UniRule"/>
</dbReference>
<dbReference type="GO" id="GO:0048038">
    <property type="term" value="F:quinone binding"/>
    <property type="evidence" value="ECO:0007669"/>
    <property type="project" value="UniProtKB-KW"/>
</dbReference>
<dbReference type="GO" id="GO:0042773">
    <property type="term" value="P:ATP synthesis coupled electron transport"/>
    <property type="evidence" value="ECO:0007669"/>
    <property type="project" value="InterPro"/>
</dbReference>
<dbReference type="HAMAP" id="MF_00445">
    <property type="entry name" value="NDH1_NuoN_1"/>
    <property type="match status" value="1"/>
</dbReference>
<dbReference type="InterPro" id="IPR010096">
    <property type="entry name" value="NADH-Q_OxRdtase_suN/2"/>
</dbReference>
<dbReference type="InterPro" id="IPR001750">
    <property type="entry name" value="ND/Mrp_TM"/>
</dbReference>
<dbReference type="NCBIfam" id="TIGR01770">
    <property type="entry name" value="NDH_I_N"/>
    <property type="match status" value="1"/>
</dbReference>
<dbReference type="NCBIfam" id="NF004442">
    <property type="entry name" value="PRK05777.1-5"/>
    <property type="match status" value="1"/>
</dbReference>
<dbReference type="PANTHER" id="PTHR22773">
    <property type="entry name" value="NADH DEHYDROGENASE"/>
    <property type="match status" value="1"/>
</dbReference>
<dbReference type="Pfam" id="PF00361">
    <property type="entry name" value="Proton_antipo_M"/>
    <property type="match status" value="1"/>
</dbReference>
<gene>
    <name evidence="1" type="primary">nuoN</name>
    <name type="ordered locus">RALTA_A1047</name>
</gene>
<accession>B3R3Y0</accession>
<proteinExistence type="inferred from homology"/>
<reference key="1">
    <citation type="journal article" date="2008" name="Genome Res.">
        <title>Genome sequence of the beta-rhizobium Cupriavidus taiwanensis and comparative genomics of rhizobia.</title>
        <authorList>
            <person name="Amadou C."/>
            <person name="Pascal G."/>
            <person name="Mangenot S."/>
            <person name="Glew M."/>
            <person name="Bontemps C."/>
            <person name="Capela D."/>
            <person name="Carrere S."/>
            <person name="Cruveiller S."/>
            <person name="Dossat C."/>
            <person name="Lajus A."/>
            <person name="Marchetti M."/>
            <person name="Poinsot V."/>
            <person name="Rouy Z."/>
            <person name="Servin B."/>
            <person name="Saad M."/>
            <person name="Schenowitz C."/>
            <person name="Barbe V."/>
            <person name="Batut J."/>
            <person name="Medigue C."/>
            <person name="Masson-Boivin C."/>
        </authorList>
    </citation>
    <scope>NUCLEOTIDE SEQUENCE [LARGE SCALE GENOMIC DNA]</scope>
    <source>
        <strain>DSM 17343 / BCRC 17206 / CCUG 44338 / CIP 107171 / LMG 19424 / R1</strain>
    </source>
</reference>
<organism>
    <name type="scientific">Cupriavidus taiwanensis (strain DSM 17343 / BCRC 17206 / CCUG 44338 / CIP 107171 / LMG 19424 / R1)</name>
    <name type="common">Ralstonia taiwanensis (strain LMG 19424)</name>
    <dbReference type="NCBI Taxonomy" id="977880"/>
    <lineage>
        <taxon>Bacteria</taxon>
        <taxon>Pseudomonadati</taxon>
        <taxon>Pseudomonadota</taxon>
        <taxon>Betaproteobacteria</taxon>
        <taxon>Burkholderiales</taxon>
        <taxon>Burkholderiaceae</taxon>
        <taxon>Cupriavidus</taxon>
    </lineage>
</organism>
<protein>
    <recommendedName>
        <fullName evidence="1">NADH-quinone oxidoreductase subunit N</fullName>
        <ecNumber evidence="1">7.1.1.-</ecNumber>
    </recommendedName>
    <alternativeName>
        <fullName evidence="1">NADH dehydrogenase I subunit N</fullName>
    </alternativeName>
    <alternativeName>
        <fullName evidence="1">NDH-1 subunit N</fullName>
    </alternativeName>
</protein>
<keyword id="KW-0997">Cell inner membrane</keyword>
<keyword id="KW-1003">Cell membrane</keyword>
<keyword id="KW-0472">Membrane</keyword>
<keyword id="KW-0520">NAD</keyword>
<keyword id="KW-0874">Quinone</keyword>
<keyword id="KW-1278">Translocase</keyword>
<keyword id="KW-0812">Transmembrane</keyword>
<keyword id="KW-1133">Transmembrane helix</keyword>
<keyword id="KW-0813">Transport</keyword>
<keyword id="KW-0830">Ubiquinone</keyword>